<accession>P27186</accession>
<geneLocation type="plasmid">
    <name>pTF-FC2</name>
</geneLocation>
<proteinExistence type="predicted"/>
<sequence>MKSEQLKQFERYAEAVGAERYRVTSIKMQADGRKQTFILDKKDGITRGFTPQEIEQRTPEMQRLQRRGENLYYTPLSDKKHHILIDDMNREKLERLIKDGYQPAAVLESSPGNYQAIITVSKLGTAHDKDVGNRLSDALNREYGDPKLSGAIHPHRAPGYENRKPKHQREDGSYPEVRLLKAERRECVKALALSSQIDAEYQRQAALKAQQPERTKAKPALELAAASGSAIDAYQRHYRDVLKRQRGGEVDLSRVDSMIAVRMRVTGHDQAAIEGAIRQCAPATRQKDEGRDWNDYAQRTARYAYSAAQPQAADLGKYRQQWEKLEGREPVRQQEQAKAQKIERDNSPGMSL</sequence>
<evidence type="ECO:0000256" key="1">
    <source>
        <dbReference type="SAM" id="MobiDB-lite"/>
    </source>
</evidence>
<feature type="chain" id="PRO_0000180533" description="DNA primase">
    <location>
        <begin position="1"/>
        <end position="352"/>
    </location>
</feature>
<feature type="region of interest" description="Disordered" evidence="1">
    <location>
        <begin position="145"/>
        <end position="172"/>
    </location>
</feature>
<feature type="region of interest" description="Disordered" evidence="1">
    <location>
        <begin position="318"/>
        <end position="352"/>
    </location>
</feature>
<feature type="compositionally biased region" description="Basic and acidic residues" evidence="1">
    <location>
        <begin position="318"/>
        <end position="332"/>
    </location>
</feature>
<reference key="1">
    <citation type="journal article" date="1991" name="Gene">
        <title>The broad-host-range plasmid pTF-FC2 requires a primase-like protein for autonomous replication in Escherichia coli.</title>
        <authorList>
            <person name="Dorrington R.A."/>
            <person name="Bardien S."/>
            <person name="Rawlings D.E."/>
        </authorList>
    </citation>
    <scope>NUCLEOTIDE SEQUENCE [GENOMIC DNA]</scope>
</reference>
<protein>
    <recommendedName>
        <fullName>DNA primase</fullName>
        <ecNumber>2.7.7.-</ecNumber>
    </recommendedName>
    <alternativeName>
        <fullName>Replication primase</fullName>
    </alternativeName>
</protein>
<name>REPB_ACIFR</name>
<organism>
    <name type="scientific">Acidithiobacillus ferrooxidans</name>
    <name type="common">Thiobacillus ferrooxidans</name>
    <dbReference type="NCBI Taxonomy" id="920"/>
    <lineage>
        <taxon>Bacteria</taxon>
        <taxon>Pseudomonadati</taxon>
        <taxon>Pseudomonadota</taxon>
        <taxon>Acidithiobacillia</taxon>
        <taxon>Acidithiobacillales</taxon>
        <taxon>Acidithiobacillaceae</taxon>
        <taxon>Acidithiobacillus</taxon>
    </lineage>
</organism>
<dbReference type="EC" id="2.7.7.-"/>
<dbReference type="EMBL" id="M64981">
    <property type="protein sequence ID" value="AAA27386.1"/>
    <property type="molecule type" value="Genomic_DNA"/>
</dbReference>
<dbReference type="PIR" id="JS0637">
    <property type="entry name" value="JS0637"/>
</dbReference>
<dbReference type="SMR" id="P27186"/>
<dbReference type="GO" id="GO:0000428">
    <property type="term" value="C:DNA-directed RNA polymerase complex"/>
    <property type="evidence" value="ECO:0007669"/>
    <property type="project" value="UniProtKB-KW"/>
</dbReference>
<dbReference type="GO" id="GO:0016779">
    <property type="term" value="F:nucleotidyltransferase activity"/>
    <property type="evidence" value="ECO:0007669"/>
    <property type="project" value="UniProtKB-KW"/>
</dbReference>
<dbReference type="GO" id="GO:0006260">
    <property type="term" value="P:DNA replication"/>
    <property type="evidence" value="ECO:0007669"/>
    <property type="project" value="UniProtKB-KW"/>
</dbReference>
<dbReference type="Gene3D" id="1.10.1240.50">
    <property type="match status" value="1"/>
</dbReference>
<dbReference type="Gene3D" id="3.30.70.1790">
    <property type="entry name" value="RepB DNA-primase, N-terminal domain"/>
    <property type="match status" value="1"/>
</dbReference>
<dbReference type="InterPro" id="IPR039459">
    <property type="entry name" value="RepB-like_DNA_primase_dom"/>
</dbReference>
<dbReference type="InterPro" id="IPR054366">
    <property type="entry name" value="RepB/MobA-like_C"/>
</dbReference>
<dbReference type="Pfam" id="PF16793">
    <property type="entry name" value="RepB_primase"/>
    <property type="match status" value="1"/>
</dbReference>
<dbReference type="Pfam" id="PF22448">
    <property type="entry name" value="RepB_primase_C"/>
    <property type="match status" value="1"/>
</dbReference>
<gene>
    <name type="primary">repB</name>
</gene>
<keyword id="KW-0235">DNA replication</keyword>
<keyword id="KW-0240">DNA-directed RNA polymerase</keyword>
<keyword id="KW-0548">Nucleotidyltransferase</keyword>
<keyword id="KW-0614">Plasmid</keyword>
<keyword id="KW-0804">Transcription</keyword>
<keyword id="KW-0808">Transferase</keyword>
<comment type="function">
    <text>Functions as a primase with respect to replication at the (vegetative) origin of replication of pTF-FC2.</text>
</comment>